<proteinExistence type="inferred from homology"/>
<evidence type="ECO:0000255" key="1">
    <source>
        <dbReference type="HAMAP-Rule" id="MF_00368"/>
    </source>
</evidence>
<evidence type="ECO:0000305" key="2"/>
<gene>
    <name evidence="1" type="primary">rplL</name>
    <name type="ordered locus">Ppha_2680</name>
</gene>
<feature type="chain" id="PRO_1000121466" description="Large ribosomal subunit protein bL12">
    <location>
        <begin position="1"/>
        <end position="124"/>
    </location>
</feature>
<organism>
    <name type="scientific">Pelodictyon phaeoclathratiforme (strain DSM 5477 / BU-1)</name>
    <dbReference type="NCBI Taxonomy" id="324925"/>
    <lineage>
        <taxon>Bacteria</taxon>
        <taxon>Pseudomonadati</taxon>
        <taxon>Chlorobiota</taxon>
        <taxon>Chlorobiia</taxon>
        <taxon>Chlorobiales</taxon>
        <taxon>Chlorobiaceae</taxon>
        <taxon>Chlorobium/Pelodictyon group</taxon>
        <taxon>Pelodictyon</taxon>
    </lineage>
</organism>
<protein>
    <recommendedName>
        <fullName evidence="1">Large ribosomal subunit protein bL12</fullName>
    </recommendedName>
    <alternativeName>
        <fullName evidence="2">50S ribosomal protein L7/L12</fullName>
    </alternativeName>
</protein>
<comment type="function">
    <text evidence="1">Forms part of the ribosomal stalk which helps the ribosome interact with GTP-bound translation factors. Is thus essential for accurate translation.</text>
</comment>
<comment type="subunit">
    <text evidence="1">Homodimer. Part of the ribosomal stalk of the 50S ribosomal subunit. Forms a multimeric L10(L12)X complex, where L10 forms an elongated spine to which 2 to 4 L12 dimers bind in a sequential fashion. Binds GTP-bound translation factors.</text>
</comment>
<comment type="similarity">
    <text evidence="1">Belongs to the bacterial ribosomal protein bL12 family.</text>
</comment>
<name>RL7_PELPB</name>
<accession>B4SG12</accession>
<dbReference type="EMBL" id="CP001110">
    <property type="protein sequence ID" value="ACF44839.1"/>
    <property type="molecule type" value="Genomic_DNA"/>
</dbReference>
<dbReference type="RefSeq" id="WP_012509311.1">
    <property type="nucleotide sequence ID" value="NC_011060.1"/>
</dbReference>
<dbReference type="SMR" id="B4SG12"/>
<dbReference type="STRING" id="324925.Ppha_2680"/>
<dbReference type="KEGG" id="pph:Ppha_2680"/>
<dbReference type="eggNOG" id="COG0222">
    <property type="taxonomic scope" value="Bacteria"/>
</dbReference>
<dbReference type="HOGENOM" id="CLU_086499_3_0_10"/>
<dbReference type="OrthoDB" id="9811748at2"/>
<dbReference type="Proteomes" id="UP000002724">
    <property type="component" value="Chromosome"/>
</dbReference>
<dbReference type="GO" id="GO:0005737">
    <property type="term" value="C:cytoplasm"/>
    <property type="evidence" value="ECO:0007669"/>
    <property type="project" value="UniProtKB-ARBA"/>
</dbReference>
<dbReference type="GO" id="GO:1990904">
    <property type="term" value="C:ribonucleoprotein complex"/>
    <property type="evidence" value="ECO:0007669"/>
    <property type="project" value="UniProtKB-KW"/>
</dbReference>
<dbReference type="GO" id="GO:0005840">
    <property type="term" value="C:ribosome"/>
    <property type="evidence" value="ECO:0007669"/>
    <property type="project" value="UniProtKB-KW"/>
</dbReference>
<dbReference type="GO" id="GO:0003729">
    <property type="term" value="F:mRNA binding"/>
    <property type="evidence" value="ECO:0007669"/>
    <property type="project" value="TreeGrafter"/>
</dbReference>
<dbReference type="GO" id="GO:0003735">
    <property type="term" value="F:structural constituent of ribosome"/>
    <property type="evidence" value="ECO:0007669"/>
    <property type="project" value="InterPro"/>
</dbReference>
<dbReference type="GO" id="GO:0006412">
    <property type="term" value="P:translation"/>
    <property type="evidence" value="ECO:0007669"/>
    <property type="project" value="UniProtKB-UniRule"/>
</dbReference>
<dbReference type="CDD" id="cd00387">
    <property type="entry name" value="Ribosomal_L7_L12"/>
    <property type="match status" value="1"/>
</dbReference>
<dbReference type="FunFam" id="3.30.1390.10:FF:000001">
    <property type="entry name" value="50S ribosomal protein L7/L12"/>
    <property type="match status" value="1"/>
</dbReference>
<dbReference type="Gene3D" id="3.30.1390.10">
    <property type="match status" value="1"/>
</dbReference>
<dbReference type="Gene3D" id="1.20.5.710">
    <property type="entry name" value="Single helix bin"/>
    <property type="match status" value="1"/>
</dbReference>
<dbReference type="HAMAP" id="MF_00368">
    <property type="entry name" value="Ribosomal_bL12"/>
    <property type="match status" value="1"/>
</dbReference>
<dbReference type="InterPro" id="IPR000206">
    <property type="entry name" value="Ribosomal_bL12"/>
</dbReference>
<dbReference type="InterPro" id="IPR013823">
    <property type="entry name" value="Ribosomal_bL12_C"/>
</dbReference>
<dbReference type="InterPro" id="IPR014719">
    <property type="entry name" value="Ribosomal_bL12_C/ClpS-like"/>
</dbReference>
<dbReference type="InterPro" id="IPR008932">
    <property type="entry name" value="Ribosomal_bL12_oligo"/>
</dbReference>
<dbReference type="InterPro" id="IPR036235">
    <property type="entry name" value="Ribosomal_bL12_oligo_N_sf"/>
</dbReference>
<dbReference type="NCBIfam" id="TIGR00855">
    <property type="entry name" value="L12"/>
    <property type="match status" value="1"/>
</dbReference>
<dbReference type="PANTHER" id="PTHR45987">
    <property type="entry name" value="39S RIBOSOMAL PROTEIN L12"/>
    <property type="match status" value="1"/>
</dbReference>
<dbReference type="PANTHER" id="PTHR45987:SF4">
    <property type="entry name" value="LARGE RIBOSOMAL SUBUNIT PROTEIN BL12M"/>
    <property type="match status" value="1"/>
</dbReference>
<dbReference type="Pfam" id="PF00542">
    <property type="entry name" value="Ribosomal_L12"/>
    <property type="match status" value="1"/>
</dbReference>
<dbReference type="Pfam" id="PF16320">
    <property type="entry name" value="Ribosomal_L12_N"/>
    <property type="match status" value="1"/>
</dbReference>
<dbReference type="SUPFAM" id="SSF54736">
    <property type="entry name" value="ClpS-like"/>
    <property type="match status" value="1"/>
</dbReference>
<dbReference type="SUPFAM" id="SSF48300">
    <property type="entry name" value="Ribosomal protein L7/12, oligomerisation (N-terminal) domain"/>
    <property type="match status" value="1"/>
</dbReference>
<keyword id="KW-1185">Reference proteome</keyword>
<keyword id="KW-0687">Ribonucleoprotein</keyword>
<keyword id="KW-0689">Ribosomal protein</keyword>
<reference key="1">
    <citation type="submission" date="2008-06" db="EMBL/GenBank/DDBJ databases">
        <title>Complete sequence of Pelodictyon phaeoclathratiforme BU-1.</title>
        <authorList>
            <consortium name="US DOE Joint Genome Institute"/>
            <person name="Lucas S."/>
            <person name="Copeland A."/>
            <person name="Lapidus A."/>
            <person name="Glavina del Rio T."/>
            <person name="Dalin E."/>
            <person name="Tice H."/>
            <person name="Bruce D."/>
            <person name="Goodwin L."/>
            <person name="Pitluck S."/>
            <person name="Schmutz J."/>
            <person name="Larimer F."/>
            <person name="Land M."/>
            <person name="Hauser L."/>
            <person name="Kyrpides N."/>
            <person name="Mikhailova N."/>
            <person name="Liu Z."/>
            <person name="Li T."/>
            <person name="Zhao F."/>
            <person name="Overmann J."/>
            <person name="Bryant D.A."/>
            <person name="Richardson P."/>
        </authorList>
    </citation>
    <scope>NUCLEOTIDE SEQUENCE [LARGE SCALE GENOMIC DNA]</scope>
    <source>
        <strain>DSM 5477 / BU-1</strain>
    </source>
</reference>
<sequence length="124" mass="12702">MSIETLVEEIGKLTLTEASELVKALEEKFGVSAAPVAVAGVAAAAAGDAPVVEEQTEFDVVLTAAGESKINVIKAVRAITGLGLKEAKDLVDGAPKTVKEAISKDEAEKIAKELKDAGASVEVK</sequence>